<sequence length="234" mass="27304">MYQSKEERVHHVFEKIYKHYDRMNSVISFRRHLKWREDTMKRMNVQKGKKALDVCCGTADWTIALAEAVGPSGEVYGLDFSKNMLQVGEQKVKERQLANVKLIHGNAMNIPFPDNTFDYVTIGFGLRNVPDYMTVLKEMYRVVKPGGKVVCLETSQPTLIGFRQLYYFYFRFIMPLFGKLFAKSYEEYSWLQESARDFPGRDELAQMFRDAGFVDIEVKSYTFGVAAMHLGHKR</sequence>
<comment type="function">
    <text evidence="1">Methyltransferase required for the conversion of demethylmenaquinol (DMKH2) to menaquinol (MKH2).</text>
</comment>
<comment type="catalytic activity">
    <reaction evidence="1">
        <text>a 2-demethylmenaquinol + S-adenosyl-L-methionine = a menaquinol + S-adenosyl-L-homocysteine + H(+)</text>
        <dbReference type="Rhea" id="RHEA:42640"/>
        <dbReference type="Rhea" id="RHEA-COMP:9539"/>
        <dbReference type="Rhea" id="RHEA-COMP:9563"/>
        <dbReference type="ChEBI" id="CHEBI:15378"/>
        <dbReference type="ChEBI" id="CHEBI:18151"/>
        <dbReference type="ChEBI" id="CHEBI:55437"/>
        <dbReference type="ChEBI" id="CHEBI:57856"/>
        <dbReference type="ChEBI" id="CHEBI:59789"/>
        <dbReference type="EC" id="2.1.1.163"/>
    </reaction>
</comment>
<comment type="pathway">
    <text evidence="1">Quinol/quinone metabolism; menaquinone biosynthesis; menaquinol from 1,4-dihydroxy-2-naphthoate: step 2/2.</text>
</comment>
<comment type="similarity">
    <text evidence="1">Belongs to the class I-like SAM-binding methyltransferase superfamily. MenG/UbiE family.</text>
</comment>
<dbReference type="EC" id="2.1.1.163" evidence="1"/>
<dbReference type="EMBL" id="CP001638">
    <property type="protein sequence ID" value="ACS24860.1"/>
    <property type="molecule type" value="Genomic_DNA"/>
</dbReference>
<dbReference type="SMR" id="C5D3E5"/>
<dbReference type="STRING" id="471223.GWCH70_2150"/>
<dbReference type="KEGG" id="gwc:GWCH70_2150"/>
<dbReference type="eggNOG" id="COG2226">
    <property type="taxonomic scope" value="Bacteria"/>
</dbReference>
<dbReference type="HOGENOM" id="CLU_037990_0_0_9"/>
<dbReference type="OrthoDB" id="9808140at2"/>
<dbReference type="UniPathway" id="UPA00079">
    <property type="reaction ID" value="UER00169"/>
</dbReference>
<dbReference type="GO" id="GO:0043770">
    <property type="term" value="F:demethylmenaquinone methyltransferase activity"/>
    <property type="evidence" value="ECO:0007669"/>
    <property type="project" value="UniProtKB-UniRule"/>
</dbReference>
<dbReference type="GO" id="GO:0009234">
    <property type="term" value="P:menaquinone biosynthetic process"/>
    <property type="evidence" value="ECO:0007669"/>
    <property type="project" value="UniProtKB-UniRule"/>
</dbReference>
<dbReference type="GO" id="GO:0032259">
    <property type="term" value="P:methylation"/>
    <property type="evidence" value="ECO:0007669"/>
    <property type="project" value="UniProtKB-KW"/>
</dbReference>
<dbReference type="CDD" id="cd02440">
    <property type="entry name" value="AdoMet_MTases"/>
    <property type="match status" value="1"/>
</dbReference>
<dbReference type="FunFam" id="3.40.50.150:FF:000086">
    <property type="entry name" value="Demethylmenaquinone methyltransferase"/>
    <property type="match status" value="1"/>
</dbReference>
<dbReference type="Gene3D" id="3.40.50.150">
    <property type="entry name" value="Vaccinia Virus protein VP39"/>
    <property type="match status" value="1"/>
</dbReference>
<dbReference type="HAMAP" id="MF_01813">
    <property type="entry name" value="MenG_UbiE_methyltr"/>
    <property type="match status" value="1"/>
</dbReference>
<dbReference type="InterPro" id="IPR014122">
    <property type="entry name" value="MenG_heptapren"/>
</dbReference>
<dbReference type="InterPro" id="IPR029063">
    <property type="entry name" value="SAM-dependent_MTases_sf"/>
</dbReference>
<dbReference type="InterPro" id="IPR004033">
    <property type="entry name" value="UbiE/COQ5_MeTrFase"/>
</dbReference>
<dbReference type="InterPro" id="IPR023576">
    <property type="entry name" value="UbiE/COQ5_MeTrFase_CS"/>
</dbReference>
<dbReference type="NCBIfam" id="TIGR02752">
    <property type="entry name" value="MenG_heptapren"/>
    <property type="match status" value="1"/>
</dbReference>
<dbReference type="NCBIfam" id="TIGR01934">
    <property type="entry name" value="MenG_MenH_UbiE"/>
    <property type="match status" value="1"/>
</dbReference>
<dbReference type="NCBIfam" id="NF001243">
    <property type="entry name" value="PRK00216.1-4"/>
    <property type="match status" value="1"/>
</dbReference>
<dbReference type="NCBIfam" id="NF001244">
    <property type="entry name" value="PRK00216.1-5"/>
    <property type="match status" value="1"/>
</dbReference>
<dbReference type="PANTHER" id="PTHR43591:SF24">
    <property type="entry name" value="2-METHOXY-6-POLYPRENYL-1,4-BENZOQUINOL METHYLASE, MITOCHONDRIAL"/>
    <property type="match status" value="1"/>
</dbReference>
<dbReference type="PANTHER" id="PTHR43591">
    <property type="entry name" value="METHYLTRANSFERASE"/>
    <property type="match status" value="1"/>
</dbReference>
<dbReference type="Pfam" id="PF01209">
    <property type="entry name" value="Ubie_methyltran"/>
    <property type="match status" value="1"/>
</dbReference>
<dbReference type="SUPFAM" id="SSF53335">
    <property type="entry name" value="S-adenosyl-L-methionine-dependent methyltransferases"/>
    <property type="match status" value="1"/>
</dbReference>
<dbReference type="PROSITE" id="PS51608">
    <property type="entry name" value="SAM_MT_UBIE"/>
    <property type="match status" value="1"/>
</dbReference>
<dbReference type="PROSITE" id="PS01183">
    <property type="entry name" value="UBIE_1"/>
    <property type="match status" value="1"/>
</dbReference>
<dbReference type="PROSITE" id="PS01184">
    <property type="entry name" value="UBIE_2"/>
    <property type="match status" value="1"/>
</dbReference>
<name>MENG_GEOSW</name>
<keyword id="KW-0474">Menaquinone biosynthesis</keyword>
<keyword id="KW-0489">Methyltransferase</keyword>
<keyword id="KW-0949">S-adenosyl-L-methionine</keyword>
<keyword id="KW-0808">Transferase</keyword>
<accession>C5D3E5</accession>
<reference key="1">
    <citation type="submission" date="2009-06" db="EMBL/GenBank/DDBJ databases">
        <title>Complete sequence of chromosome of Geopacillus sp. WCH70.</title>
        <authorList>
            <consortium name="US DOE Joint Genome Institute"/>
            <person name="Lucas S."/>
            <person name="Copeland A."/>
            <person name="Lapidus A."/>
            <person name="Glavina del Rio T."/>
            <person name="Dalin E."/>
            <person name="Tice H."/>
            <person name="Bruce D."/>
            <person name="Goodwin L."/>
            <person name="Pitluck S."/>
            <person name="Chertkov O."/>
            <person name="Brettin T."/>
            <person name="Detter J.C."/>
            <person name="Han C."/>
            <person name="Larimer F."/>
            <person name="Land M."/>
            <person name="Hauser L."/>
            <person name="Kyrpides N."/>
            <person name="Mikhailova N."/>
            <person name="Brumm P."/>
            <person name="Mead D.A."/>
            <person name="Richardson P."/>
        </authorList>
    </citation>
    <scope>NUCLEOTIDE SEQUENCE [LARGE SCALE GENOMIC DNA]</scope>
    <source>
        <strain>WCH70</strain>
    </source>
</reference>
<feature type="chain" id="PRO_1000215986" description="Demethylmenaquinone methyltransferase">
    <location>
        <begin position="1"/>
        <end position="234"/>
    </location>
</feature>
<feature type="binding site" evidence="1">
    <location>
        <position position="58"/>
    </location>
    <ligand>
        <name>S-adenosyl-L-methionine</name>
        <dbReference type="ChEBI" id="CHEBI:59789"/>
    </ligand>
</feature>
<feature type="binding site" evidence="1">
    <location>
        <position position="79"/>
    </location>
    <ligand>
        <name>S-adenosyl-L-methionine</name>
        <dbReference type="ChEBI" id="CHEBI:59789"/>
    </ligand>
</feature>
<feature type="binding site" evidence="1">
    <location>
        <begin position="106"/>
        <end position="107"/>
    </location>
    <ligand>
        <name>S-adenosyl-L-methionine</name>
        <dbReference type="ChEBI" id="CHEBI:59789"/>
    </ligand>
</feature>
<organism>
    <name type="scientific">Geobacillus sp. (strain WCH70)</name>
    <dbReference type="NCBI Taxonomy" id="471223"/>
    <lineage>
        <taxon>Bacteria</taxon>
        <taxon>Bacillati</taxon>
        <taxon>Bacillota</taxon>
        <taxon>Bacilli</taxon>
        <taxon>Bacillales</taxon>
        <taxon>Anoxybacillaceae</taxon>
        <taxon>Geobacillus</taxon>
    </lineage>
</organism>
<proteinExistence type="inferred from homology"/>
<evidence type="ECO:0000255" key="1">
    <source>
        <dbReference type="HAMAP-Rule" id="MF_01813"/>
    </source>
</evidence>
<gene>
    <name evidence="1" type="primary">menG</name>
    <name type="ordered locus">GWCH70_2150</name>
</gene>
<protein>
    <recommendedName>
        <fullName evidence="1">Demethylmenaquinone methyltransferase</fullName>
        <ecNumber evidence="1">2.1.1.163</ecNumber>
    </recommendedName>
</protein>